<comment type="catalytic activity">
    <reaction evidence="1">
        <text>(S)-4-amino-5-oxopentanoate = 5-aminolevulinate</text>
        <dbReference type="Rhea" id="RHEA:14265"/>
        <dbReference type="ChEBI" id="CHEBI:57501"/>
        <dbReference type="ChEBI" id="CHEBI:356416"/>
        <dbReference type="EC" id="5.4.3.8"/>
    </reaction>
</comment>
<comment type="cofactor">
    <cofactor evidence="1">
        <name>pyridoxal 5'-phosphate</name>
        <dbReference type="ChEBI" id="CHEBI:597326"/>
    </cofactor>
</comment>
<comment type="pathway">
    <text evidence="1">Porphyrin-containing compound metabolism; protoporphyrin-IX biosynthesis; 5-aminolevulinate from L-glutamyl-tRNA(Glu): step 2/2.</text>
</comment>
<comment type="subunit">
    <text evidence="1">Homodimer.</text>
</comment>
<comment type="subcellular location">
    <subcellularLocation>
        <location evidence="1">Cytoplasm</location>
    </subcellularLocation>
</comment>
<comment type="similarity">
    <text evidence="1">Belongs to the class-III pyridoxal-phosphate-dependent aminotransferase family. HemL subfamily.</text>
</comment>
<keyword id="KW-0963">Cytoplasm</keyword>
<keyword id="KW-0413">Isomerase</keyword>
<keyword id="KW-0627">Porphyrin biosynthesis</keyword>
<keyword id="KW-0663">Pyridoxal phosphate</keyword>
<organism>
    <name type="scientific">Shewanella baltica (strain OS185)</name>
    <dbReference type="NCBI Taxonomy" id="402882"/>
    <lineage>
        <taxon>Bacteria</taxon>
        <taxon>Pseudomonadati</taxon>
        <taxon>Pseudomonadota</taxon>
        <taxon>Gammaproteobacteria</taxon>
        <taxon>Alteromonadales</taxon>
        <taxon>Shewanellaceae</taxon>
        <taxon>Shewanella</taxon>
    </lineage>
</organism>
<accession>A6WKL6</accession>
<name>GSA_SHEB8</name>
<dbReference type="EC" id="5.4.3.8" evidence="1"/>
<dbReference type="EMBL" id="CP000753">
    <property type="protein sequence ID" value="ABS07355.1"/>
    <property type="molecule type" value="Genomic_DNA"/>
</dbReference>
<dbReference type="RefSeq" id="WP_012088581.1">
    <property type="nucleotide sequence ID" value="NC_009665.1"/>
</dbReference>
<dbReference type="SMR" id="A6WKL6"/>
<dbReference type="KEGG" id="sbm:Shew185_1204"/>
<dbReference type="HOGENOM" id="CLU_016922_1_5_6"/>
<dbReference type="UniPathway" id="UPA00251">
    <property type="reaction ID" value="UER00317"/>
</dbReference>
<dbReference type="GO" id="GO:0005737">
    <property type="term" value="C:cytoplasm"/>
    <property type="evidence" value="ECO:0007669"/>
    <property type="project" value="UniProtKB-SubCell"/>
</dbReference>
<dbReference type="GO" id="GO:0042286">
    <property type="term" value="F:glutamate-1-semialdehyde 2,1-aminomutase activity"/>
    <property type="evidence" value="ECO:0007669"/>
    <property type="project" value="UniProtKB-UniRule"/>
</dbReference>
<dbReference type="GO" id="GO:0030170">
    <property type="term" value="F:pyridoxal phosphate binding"/>
    <property type="evidence" value="ECO:0007669"/>
    <property type="project" value="InterPro"/>
</dbReference>
<dbReference type="GO" id="GO:0008483">
    <property type="term" value="F:transaminase activity"/>
    <property type="evidence" value="ECO:0007669"/>
    <property type="project" value="InterPro"/>
</dbReference>
<dbReference type="GO" id="GO:0006782">
    <property type="term" value="P:protoporphyrinogen IX biosynthetic process"/>
    <property type="evidence" value="ECO:0007669"/>
    <property type="project" value="UniProtKB-UniRule"/>
</dbReference>
<dbReference type="CDD" id="cd00610">
    <property type="entry name" value="OAT_like"/>
    <property type="match status" value="1"/>
</dbReference>
<dbReference type="FunFam" id="3.40.640.10:FF:000021">
    <property type="entry name" value="Glutamate-1-semialdehyde 2,1-aminomutase"/>
    <property type="match status" value="1"/>
</dbReference>
<dbReference type="Gene3D" id="3.90.1150.10">
    <property type="entry name" value="Aspartate Aminotransferase, domain 1"/>
    <property type="match status" value="1"/>
</dbReference>
<dbReference type="Gene3D" id="3.40.640.10">
    <property type="entry name" value="Type I PLP-dependent aspartate aminotransferase-like (Major domain)"/>
    <property type="match status" value="1"/>
</dbReference>
<dbReference type="HAMAP" id="MF_00375">
    <property type="entry name" value="HemL_aminotrans_3"/>
    <property type="match status" value="1"/>
</dbReference>
<dbReference type="InterPro" id="IPR004639">
    <property type="entry name" value="4pyrrol_synth_GluAld_NH2Trfase"/>
</dbReference>
<dbReference type="InterPro" id="IPR005814">
    <property type="entry name" value="Aminotrans_3"/>
</dbReference>
<dbReference type="InterPro" id="IPR049704">
    <property type="entry name" value="Aminotrans_3_PPA_site"/>
</dbReference>
<dbReference type="InterPro" id="IPR015424">
    <property type="entry name" value="PyrdxlP-dep_Trfase"/>
</dbReference>
<dbReference type="InterPro" id="IPR015421">
    <property type="entry name" value="PyrdxlP-dep_Trfase_major"/>
</dbReference>
<dbReference type="InterPro" id="IPR015422">
    <property type="entry name" value="PyrdxlP-dep_Trfase_small"/>
</dbReference>
<dbReference type="NCBIfam" id="TIGR00713">
    <property type="entry name" value="hemL"/>
    <property type="match status" value="1"/>
</dbReference>
<dbReference type="NCBIfam" id="NF000818">
    <property type="entry name" value="PRK00062.1"/>
    <property type="match status" value="1"/>
</dbReference>
<dbReference type="PANTHER" id="PTHR43713">
    <property type="entry name" value="GLUTAMATE-1-SEMIALDEHYDE 2,1-AMINOMUTASE"/>
    <property type="match status" value="1"/>
</dbReference>
<dbReference type="PANTHER" id="PTHR43713:SF3">
    <property type="entry name" value="GLUTAMATE-1-SEMIALDEHYDE 2,1-AMINOMUTASE 1, CHLOROPLASTIC-RELATED"/>
    <property type="match status" value="1"/>
</dbReference>
<dbReference type="Pfam" id="PF00202">
    <property type="entry name" value="Aminotran_3"/>
    <property type="match status" value="1"/>
</dbReference>
<dbReference type="SUPFAM" id="SSF53383">
    <property type="entry name" value="PLP-dependent transferases"/>
    <property type="match status" value="1"/>
</dbReference>
<dbReference type="PROSITE" id="PS00600">
    <property type="entry name" value="AA_TRANSFER_CLASS_3"/>
    <property type="match status" value="1"/>
</dbReference>
<reference key="1">
    <citation type="submission" date="2007-07" db="EMBL/GenBank/DDBJ databases">
        <title>Complete sequence of chromosome of Shewanella baltica OS185.</title>
        <authorList>
            <consortium name="US DOE Joint Genome Institute"/>
            <person name="Copeland A."/>
            <person name="Lucas S."/>
            <person name="Lapidus A."/>
            <person name="Barry K."/>
            <person name="Glavina del Rio T."/>
            <person name="Dalin E."/>
            <person name="Tice H."/>
            <person name="Pitluck S."/>
            <person name="Sims D."/>
            <person name="Brettin T."/>
            <person name="Bruce D."/>
            <person name="Detter J.C."/>
            <person name="Han C."/>
            <person name="Schmutz J."/>
            <person name="Larimer F."/>
            <person name="Land M."/>
            <person name="Hauser L."/>
            <person name="Kyrpides N."/>
            <person name="Mikhailova N."/>
            <person name="Brettar I."/>
            <person name="Rodrigues J."/>
            <person name="Konstantinidis K."/>
            <person name="Tiedje J."/>
            <person name="Richardson P."/>
        </authorList>
    </citation>
    <scope>NUCLEOTIDE SEQUENCE [LARGE SCALE GENOMIC DNA]</scope>
    <source>
        <strain>OS185</strain>
    </source>
</reference>
<protein>
    <recommendedName>
        <fullName evidence="1">Glutamate-1-semialdehyde 2,1-aminomutase</fullName>
        <shortName evidence="1">GSA</shortName>
        <ecNumber evidence="1">5.4.3.8</ecNumber>
    </recommendedName>
    <alternativeName>
        <fullName evidence="1">Glutamate-1-semialdehyde aminotransferase</fullName>
        <shortName evidence="1">GSA-AT</shortName>
    </alternativeName>
</protein>
<evidence type="ECO:0000255" key="1">
    <source>
        <dbReference type="HAMAP-Rule" id="MF_00375"/>
    </source>
</evidence>
<proteinExistence type="inferred from homology"/>
<feature type="chain" id="PRO_1000060001" description="Glutamate-1-semialdehyde 2,1-aminomutase">
    <location>
        <begin position="1"/>
        <end position="430"/>
    </location>
</feature>
<feature type="modified residue" description="N6-(pyridoxal phosphate)lysine" evidence="1">
    <location>
        <position position="265"/>
    </location>
</feature>
<gene>
    <name evidence="1" type="primary">hemL</name>
    <name type="ordered locus">Shew185_1204</name>
</gene>
<sequence>MTRSEALFEQAKKTIPGGVNSPVRAFNGVGGSPLFIEKANGAYIYDADGKAYIDYVGSWGPMILGHNHPKIRAAVLAAVENGLSFGAPTELEVQMAEKVISMVPSIEQVRMVSSGTEATMSAIRLARGFTNRDKILKFEGCYHGHADCLLVKAGSGALTLGQPSSPGIPEDFAKHTLTAVYNDLDSVRTLFEQYPTDISCIIIEPVAGNMNCIPPIPGFLQGLRDICDEFGALMIIDEVMTGFRVSQSGAQGYYGVTPDLTTLGKVIGGGMPVGAFGGRKDVMQFIAPTGPVYQAGTLSGNPIAMSAGLAQMEALCEEGLYEELSAKTKRIAEGFKAAADKHGIPMAINYVGGMFGFFFTEQPEITRFDQVTQCNIEQFRIFYHGMLDEGVYLAPSAYEAGFLSMAHGEEEMRLTLEAADRVLASMKAAS</sequence>